<accession>P48182</accession>
<dbReference type="EMBL" id="X86403">
    <property type="protein sequence ID" value="CAA60157.1"/>
    <property type="molecule type" value="mRNA"/>
</dbReference>
<dbReference type="EMBL" id="FO081325">
    <property type="protein sequence ID" value="CCD70794.1"/>
    <property type="molecule type" value="Genomic_DNA"/>
</dbReference>
<dbReference type="PIR" id="S57648">
    <property type="entry name" value="S57648"/>
</dbReference>
<dbReference type="RefSeq" id="NP_509128.1">
    <property type="nucleotide sequence ID" value="NM_076727.9"/>
</dbReference>
<dbReference type="SMR" id="P48182"/>
<dbReference type="FunCoup" id="P48182">
    <property type="interactions" value="49"/>
</dbReference>
<dbReference type="STRING" id="6239.K11G12.2.1"/>
<dbReference type="TCDB" id="1.A.9.1.13">
    <property type="family name" value="the neurotransmitter receptor, cys loop, ligand-gated ion channel (lic) family"/>
</dbReference>
<dbReference type="TCDB" id="1.A.9.1.2">
    <property type="family name" value="the neurotransmitter receptor, cys loop, ligand-gated ion channel (lic) family"/>
</dbReference>
<dbReference type="GlyCosmos" id="P48182">
    <property type="glycosylation" value="4 sites, No reported glycans"/>
</dbReference>
<dbReference type="PaxDb" id="6239-K11G12.2"/>
<dbReference type="EnsemblMetazoa" id="K11G12.2.1">
    <property type="protein sequence ID" value="K11G12.2.1"/>
    <property type="gene ID" value="WBGene00000042"/>
</dbReference>
<dbReference type="GeneID" id="180936"/>
<dbReference type="KEGG" id="cel:CELE_K11G12.2"/>
<dbReference type="UCSC" id="K11G12.2">
    <property type="organism name" value="c. elegans"/>
</dbReference>
<dbReference type="AGR" id="WB:WBGene00000042"/>
<dbReference type="CTD" id="180936"/>
<dbReference type="WormBase" id="K11G12.2">
    <property type="protein sequence ID" value="CE07380"/>
    <property type="gene ID" value="WBGene00000042"/>
    <property type="gene designation" value="acr-2"/>
</dbReference>
<dbReference type="eggNOG" id="KOG3645">
    <property type="taxonomic scope" value="Eukaryota"/>
</dbReference>
<dbReference type="HOGENOM" id="CLU_018074_1_0_1"/>
<dbReference type="InParanoid" id="P48182"/>
<dbReference type="OMA" id="SHKMPTW"/>
<dbReference type="OrthoDB" id="5975154at2759"/>
<dbReference type="PhylomeDB" id="P48182"/>
<dbReference type="Reactome" id="R-CEL-629587">
    <property type="pathway name" value="Highly sodium permeable postsynaptic acetylcholine nicotinic receptors"/>
</dbReference>
<dbReference type="Reactome" id="R-CEL-629594">
    <property type="pathway name" value="Highly calcium permeable postsynaptic nicotinic acetylcholine receptors"/>
</dbReference>
<dbReference type="Reactome" id="R-CEL-629597">
    <property type="pathway name" value="Highly calcium permeable nicotinic acetylcholine receptors"/>
</dbReference>
<dbReference type="Reactome" id="R-CEL-6798695">
    <property type="pathway name" value="Neutrophil degranulation"/>
</dbReference>
<dbReference type="PRO" id="PR:P48182"/>
<dbReference type="Proteomes" id="UP000001940">
    <property type="component" value="Chromosome X"/>
</dbReference>
<dbReference type="Bgee" id="WBGene00000042">
    <property type="expression patterns" value="Expressed in larva and 3 other cell types or tissues"/>
</dbReference>
<dbReference type="GO" id="GO:0005892">
    <property type="term" value="C:acetylcholine-gated channel complex"/>
    <property type="evidence" value="ECO:0000318"/>
    <property type="project" value="GO_Central"/>
</dbReference>
<dbReference type="GO" id="GO:0043005">
    <property type="term" value="C:neuron projection"/>
    <property type="evidence" value="ECO:0000314"/>
    <property type="project" value="WormBase"/>
</dbReference>
<dbReference type="GO" id="GO:0005886">
    <property type="term" value="C:plasma membrane"/>
    <property type="evidence" value="ECO:0000318"/>
    <property type="project" value="GO_Central"/>
</dbReference>
<dbReference type="GO" id="GO:0045211">
    <property type="term" value="C:postsynaptic membrane"/>
    <property type="evidence" value="ECO:0007669"/>
    <property type="project" value="UniProtKB-SubCell"/>
</dbReference>
<dbReference type="GO" id="GO:0045202">
    <property type="term" value="C:synapse"/>
    <property type="evidence" value="ECO:0000318"/>
    <property type="project" value="GO_Central"/>
</dbReference>
<dbReference type="GO" id="GO:0022848">
    <property type="term" value="F:acetylcholine-gated monoatomic cation-selective channel activity"/>
    <property type="evidence" value="ECO:0000314"/>
    <property type="project" value="WormBase"/>
</dbReference>
<dbReference type="GO" id="GO:0005231">
    <property type="term" value="F:excitatory extracellular ligand-gated monoatomic ion channel activity"/>
    <property type="evidence" value="ECO:0000314"/>
    <property type="project" value="WormBase"/>
</dbReference>
<dbReference type="GO" id="GO:0004888">
    <property type="term" value="F:transmembrane signaling receptor activity"/>
    <property type="evidence" value="ECO:0007669"/>
    <property type="project" value="InterPro"/>
</dbReference>
<dbReference type="GO" id="GO:1904315">
    <property type="term" value="F:transmitter-gated monoatomic ion channel activity involved in regulation of postsynaptic membrane potential"/>
    <property type="evidence" value="ECO:0000318"/>
    <property type="project" value="GO_Central"/>
</dbReference>
<dbReference type="GO" id="GO:0098703">
    <property type="term" value="P:calcium ion import across plasma membrane"/>
    <property type="evidence" value="ECO:0000314"/>
    <property type="project" value="WormBase"/>
</dbReference>
<dbReference type="GO" id="GO:0007268">
    <property type="term" value="P:chemical synaptic transmission"/>
    <property type="evidence" value="ECO:0000318"/>
    <property type="project" value="GO_Central"/>
</dbReference>
<dbReference type="GO" id="GO:0098662">
    <property type="term" value="P:inorganic cation transmembrane transport"/>
    <property type="evidence" value="ECO:0000314"/>
    <property type="project" value="WormBase"/>
</dbReference>
<dbReference type="GO" id="GO:0034220">
    <property type="term" value="P:monoatomic ion transmembrane transport"/>
    <property type="evidence" value="ECO:0000318"/>
    <property type="project" value="GO_Central"/>
</dbReference>
<dbReference type="GO" id="GO:0007274">
    <property type="term" value="P:neuromuscular synaptic transmission"/>
    <property type="evidence" value="ECO:0000315"/>
    <property type="project" value="UniProtKB"/>
</dbReference>
<dbReference type="GO" id="GO:0045727">
    <property type="term" value="P:positive regulation of translation"/>
    <property type="evidence" value="ECO:0000314"/>
    <property type="project" value="UniProtKB"/>
</dbReference>
<dbReference type="GO" id="GO:0010468">
    <property type="term" value="P:regulation of gene expression"/>
    <property type="evidence" value="ECO:0000315"/>
    <property type="project" value="UniProtKB"/>
</dbReference>
<dbReference type="GO" id="GO:0040012">
    <property type="term" value="P:regulation of locomotion"/>
    <property type="evidence" value="ECO:0000315"/>
    <property type="project" value="UniProtKB"/>
</dbReference>
<dbReference type="GO" id="GO:0042391">
    <property type="term" value="P:regulation of membrane potential"/>
    <property type="evidence" value="ECO:0000318"/>
    <property type="project" value="GO_Central"/>
</dbReference>
<dbReference type="GO" id="GO:0006937">
    <property type="term" value="P:regulation of muscle contraction"/>
    <property type="evidence" value="ECO:0000315"/>
    <property type="project" value="UniProtKB"/>
</dbReference>
<dbReference type="CDD" id="cd19032">
    <property type="entry name" value="LGIC_ECD_nAChR_proto_beta-like"/>
    <property type="match status" value="1"/>
</dbReference>
<dbReference type="CDD" id="cd19064">
    <property type="entry name" value="LGIC_TM_nAChR"/>
    <property type="match status" value="1"/>
</dbReference>
<dbReference type="FunFam" id="1.20.58.390:FF:000035">
    <property type="entry name" value="Acetylcholine receptor subunit beta-like 1"/>
    <property type="match status" value="1"/>
</dbReference>
<dbReference type="FunFam" id="2.70.170.10:FF:000023">
    <property type="entry name" value="Acetylcholine receptor subunit beta-like 1"/>
    <property type="match status" value="1"/>
</dbReference>
<dbReference type="FunFam" id="1.20.58.390:FF:000086">
    <property type="entry name" value="Acetylcholine receptor subunit beta-type acr-2"/>
    <property type="match status" value="1"/>
</dbReference>
<dbReference type="Gene3D" id="2.70.170.10">
    <property type="entry name" value="Neurotransmitter-gated ion-channel ligand-binding domain"/>
    <property type="match status" value="1"/>
</dbReference>
<dbReference type="Gene3D" id="1.20.58.390">
    <property type="entry name" value="Neurotransmitter-gated ion-channel transmembrane domain"/>
    <property type="match status" value="2"/>
</dbReference>
<dbReference type="InterPro" id="IPR006202">
    <property type="entry name" value="Neur_chan_lig-bd"/>
</dbReference>
<dbReference type="InterPro" id="IPR036734">
    <property type="entry name" value="Neur_chan_lig-bd_sf"/>
</dbReference>
<dbReference type="InterPro" id="IPR006201">
    <property type="entry name" value="Neur_channel"/>
</dbReference>
<dbReference type="InterPro" id="IPR036719">
    <property type="entry name" value="Neuro-gated_channel_TM_sf"/>
</dbReference>
<dbReference type="InterPro" id="IPR038050">
    <property type="entry name" value="Neuro_actylchol_rec"/>
</dbReference>
<dbReference type="InterPro" id="IPR006029">
    <property type="entry name" value="Neurotrans-gated_channel_TM"/>
</dbReference>
<dbReference type="InterPro" id="IPR018000">
    <property type="entry name" value="Neurotransmitter_ion_chnl_CS"/>
</dbReference>
<dbReference type="InterPro" id="IPR002394">
    <property type="entry name" value="Nicotinic_acetylcholine_rcpt"/>
</dbReference>
<dbReference type="NCBIfam" id="TIGR00860">
    <property type="entry name" value="LIC"/>
    <property type="match status" value="1"/>
</dbReference>
<dbReference type="PANTHER" id="PTHR18945">
    <property type="entry name" value="NEUROTRANSMITTER GATED ION CHANNEL"/>
    <property type="match status" value="1"/>
</dbReference>
<dbReference type="Pfam" id="PF02931">
    <property type="entry name" value="Neur_chan_LBD"/>
    <property type="match status" value="1"/>
</dbReference>
<dbReference type="Pfam" id="PF02932">
    <property type="entry name" value="Neur_chan_memb"/>
    <property type="match status" value="1"/>
</dbReference>
<dbReference type="PRINTS" id="PR00254">
    <property type="entry name" value="NICOTINICR"/>
</dbReference>
<dbReference type="PRINTS" id="PR00252">
    <property type="entry name" value="NRIONCHANNEL"/>
</dbReference>
<dbReference type="SUPFAM" id="SSF90112">
    <property type="entry name" value="Neurotransmitter-gated ion-channel transmembrane pore"/>
    <property type="match status" value="1"/>
</dbReference>
<dbReference type="SUPFAM" id="SSF63712">
    <property type="entry name" value="Nicotinic receptor ligand binding domain-like"/>
    <property type="match status" value="1"/>
</dbReference>
<dbReference type="PROSITE" id="PS00236">
    <property type="entry name" value="NEUROTR_ION_CHANNEL"/>
    <property type="match status" value="1"/>
</dbReference>
<organism>
    <name type="scientific">Caenorhabditis elegans</name>
    <dbReference type="NCBI Taxonomy" id="6239"/>
    <lineage>
        <taxon>Eukaryota</taxon>
        <taxon>Metazoa</taxon>
        <taxon>Ecdysozoa</taxon>
        <taxon>Nematoda</taxon>
        <taxon>Chromadorea</taxon>
        <taxon>Rhabditida</taxon>
        <taxon>Rhabditina</taxon>
        <taxon>Rhabditomorpha</taxon>
        <taxon>Rhabditoidea</taxon>
        <taxon>Rhabditidae</taxon>
        <taxon>Peloderinae</taxon>
        <taxon>Caenorhabditis</taxon>
    </lineage>
</organism>
<sequence>MKKTVKILLILITVFLKVHCNGGHDDEAADFLSHTNIDDPNNSSDPNKNSDQGDTMGEDEDRLVIDLFREYNFLIRPVKNVSSPPVVVDFGVAMILLINVDEKNQILQTNVWLTMKWNDFQLAWNPAEYGNISNLHVPSDRVWLPDIVLFNNADGNYEVSFKSNVFVDHHGDVTWVPPAMFKSSCRIDVEWFPFDEQCCTLVFGSWTYNSEEVRLHWYNNIQAVQLHDYSYSGIWDVIDVPGQLVHKPDLKENKMVFNVVIRRKTLFYTVILIIPTVLMAFLSVMAFYLPVDSGEKVSLTISLLLALVVFLLLVSKILPPTSNIPLMGKYLLLAFVLNITAVVGTVVIVNIYFRSALSHKMPTWVRKVFLEFLPHLLVMKRPERIPIFNGYFVEEYCASEIFDASLVMPSMTATMLPFLQVTTNLKAASSTSSGQSSEHHENCSKWKKRLSIRMSKRRAPRARLDDDSEDIIDDTNGNHVDSLQEKISKEMKTTVEAIAYIAEHMKREMSLKKMRDDWKYVAMVLDRLILLIFFGVTLGGTLGIICSAPHVFDFVDQEAIISKLNAKYLPSDMYS</sequence>
<protein>
    <recommendedName>
        <fullName>Acetylcholine receptor subunit beta-type acr-2</fullName>
    </recommendedName>
</protein>
<evidence type="ECO:0000250" key="1"/>
<evidence type="ECO:0000250" key="2">
    <source>
        <dbReference type="UniProtKB" id="Q23022"/>
    </source>
</evidence>
<evidence type="ECO:0000255" key="3"/>
<evidence type="ECO:0000256" key="4">
    <source>
        <dbReference type="SAM" id="MobiDB-lite"/>
    </source>
</evidence>
<evidence type="ECO:0000269" key="5">
    <source>
    </source>
</evidence>
<evidence type="ECO:0000269" key="6">
    <source>
    </source>
</evidence>
<evidence type="ECO:0000269" key="7">
    <source>
    </source>
</evidence>
<evidence type="ECO:0000305" key="8"/>
<comment type="function">
    <text evidence="5 6 7">Non-alpha subunit of nicotinic acetylcholine receptor (nAChR) (PubMed:20027209, PubMed:8581398). Acts in cholinergic motoneurons to regulate presynaptic neurotransmitter release, thereby ensuring normal level of excitation of cholinergic motoneurons during locomotion (PubMed:20027209, PubMed:23658528, PubMed:27782882).</text>
</comment>
<comment type="subunit">
    <text evidence="5 7">Component of nicotinic acetylcholine receptor. In cholinergic motoneurons, composed of 2 non-alpha subunits acr-2 and acr-3, and 3 alpha subunits unc-38, unc-63 and acr-12.</text>
</comment>
<comment type="subcellular location">
    <subcellularLocation>
        <location evidence="2">Postsynaptic cell membrane</location>
        <topology evidence="3">Multi-pass membrane protein</topology>
    </subcellularLocation>
    <subcellularLocation>
        <location evidence="2">Cell membrane</location>
        <topology evidence="3">Multi-pass membrane protein</topology>
    </subcellularLocation>
</comment>
<comment type="tissue specificity">
    <text evidence="5">Specifically expressed in cholinergic ventral cord motoneurons of the VA, VB, DA and DB classes but not AS and VC classes. Expressed in PVQ and DVC neurons in the tail.</text>
</comment>
<comment type="developmental stage">
    <text evidence="5">Expressed from L1 larval stage through adults.</text>
</comment>
<comment type="disruption phenotype">
    <text evidence="5">Locomotion is slower. Moderately resistant to paralysis induced by acetylcholine esterase inhibitor aldicarb but sensitivity to acetylcholine agonist levamisole is normal. Reduced both cholinergic and GABAergic motoneuron activities characterized by a reduction in miniature postsynaptic currents in muscles.</text>
</comment>
<comment type="similarity">
    <text evidence="8">Belongs to the ligand-gated ion channel (TC 1.A.9) family. Acetylcholine receptor (TC 1.A.9.1) subfamily.</text>
</comment>
<name>ACR2_CAEEL</name>
<proteinExistence type="evidence at protein level"/>
<keyword id="KW-1003">Cell membrane</keyword>
<keyword id="KW-1015">Disulfide bond</keyword>
<keyword id="KW-0325">Glycoprotein</keyword>
<keyword id="KW-0407">Ion channel</keyword>
<keyword id="KW-0406">Ion transport</keyword>
<keyword id="KW-1071">Ligand-gated ion channel</keyword>
<keyword id="KW-0472">Membrane</keyword>
<keyword id="KW-0628">Postsynaptic cell membrane</keyword>
<keyword id="KW-0675">Receptor</keyword>
<keyword id="KW-1185">Reference proteome</keyword>
<keyword id="KW-0732">Signal</keyword>
<keyword id="KW-0770">Synapse</keyword>
<keyword id="KW-0812">Transmembrane</keyword>
<keyword id="KW-1133">Transmembrane helix</keyword>
<keyword id="KW-0813">Transport</keyword>
<gene>
    <name type="primary">acr-2</name>
    <name type="ORF">K11G12.2</name>
</gene>
<feature type="signal peptide" evidence="3">
    <location>
        <begin position="1"/>
        <end position="20"/>
    </location>
</feature>
<feature type="chain" id="PRO_0000000398" description="Acetylcholine receptor subunit beta-type acr-2">
    <location>
        <begin position="21"/>
        <end position="575"/>
    </location>
</feature>
<feature type="topological domain" description="Extracellular" evidence="3">
    <location>
        <begin position="21"/>
        <end position="270"/>
    </location>
</feature>
<feature type="transmembrane region" description="Helical" evidence="3">
    <location>
        <begin position="271"/>
        <end position="291"/>
    </location>
</feature>
<feature type="transmembrane region" description="Helical" evidence="3">
    <location>
        <begin position="299"/>
        <end position="319"/>
    </location>
</feature>
<feature type="transmembrane region" description="Helical" evidence="3">
    <location>
        <begin position="331"/>
        <end position="351"/>
    </location>
</feature>
<feature type="topological domain" description="Cytoplasmic" evidence="3">
    <location>
        <begin position="352"/>
        <end position="527"/>
    </location>
</feature>
<feature type="transmembrane region" description="Helical" evidence="3">
    <location>
        <begin position="528"/>
        <end position="548"/>
    </location>
</feature>
<feature type="region of interest" description="Disordered" evidence="4">
    <location>
        <begin position="31"/>
        <end position="57"/>
    </location>
</feature>
<feature type="compositionally biased region" description="Low complexity" evidence="4">
    <location>
        <begin position="38"/>
        <end position="50"/>
    </location>
</feature>
<feature type="glycosylation site" description="N-linked (GlcNAc...) asparagine" evidence="3">
    <location>
        <position position="41"/>
    </location>
</feature>
<feature type="glycosylation site" description="N-linked (GlcNAc...) asparagine" evidence="3">
    <location>
        <position position="42"/>
    </location>
</feature>
<feature type="glycosylation site" description="N-linked (GlcNAc...) asparagine" evidence="3">
    <location>
        <position position="80"/>
    </location>
</feature>
<feature type="glycosylation site" description="N-linked (GlcNAc...) asparagine" evidence="3">
    <location>
        <position position="131"/>
    </location>
</feature>
<feature type="disulfide bond" evidence="1">
    <location>
        <begin position="185"/>
        <end position="199"/>
    </location>
</feature>
<feature type="mutagenesis site" description="In n2420; constitutively active. Spontaneous convulsions and shrinking behavior in response to touch. Convulsions are suppressed in an unc-74, unc-50, unc-38 or unc-63 mutant background. Enhanced neurotransmitter release by cholinergic motoneurons and reduced neurotransmitter release by GABAergic motoneurons. Increases neuropeptide flp-18 expression in cholinergic B-type motor neurons. Increases sensitivity to paralysis induced by acetylcholine esterase inhibitor aldicarb or acetylcholine agonist levamisole in L3-L4 larvae and adults." evidence="5 6">
    <original>V</original>
    <variation>M</variation>
    <location>
        <position position="309"/>
    </location>
</feature>
<reference key="1">
    <citation type="journal article" date="1995" name="Recept. Channels">
        <title>Molecular cloning and functional co-expression of a Caenorhabditis elegans nicotinic acetylcholine receptor subunit (acr-2).</title>
        <authorList>
            <person name="Squire M.D."/>
            <person name="Tornoe C.A."/>
            <person name="Baylis H.A."/>
            <person name="Fleming J.T."/>
            <person name="Barnard E.A."/>
            <person name="Sattelle D.B."/>
        </authorList>
    </citation>
    <scope>NUCLEOTIDE SEQUENCE [MRNA]</scope>
    <scope>FUNCTION</scope>
    <scope>INTERACTION WITH NICOTINIC ACETYLCHOLINE RECEPTOR</scope>
    <source>
        <strain>Bristol N2</strain>
    </source>
</reference>
<reference key="2">
    <citation type="journal article" date="1998" name="Science">
        <title>Genome sequence of the nematode C. elegans: a platform for investigating biology.</title>
        <authorList>
            <consortium name="The C. elegans sequencing consortium"/>
        </authorList>
    </citation>
    <scope>NUCLEOTIDE SEQUENCE [LARGE SCALE GENOMIC DNA]</scope>
    <source>
        <strain>Bristol N2</strain>
    </source>
</reference>
<reference key="3">
    <citation type="journal article" date="2009" name="PLoS Biol.">
        <title>A neuronal acetylcholine receptor regulates the balance of muscle excitation and inhibition in Caenorhabditis elegans.</title>
        <authorList>
            <person name="Jospin M."/>
            <person name="Qi Y.B."/>
            <person name="Stawicki T.M."/>
            <person name="Boulin T."/>
            <person name="Schuske K.R."/>
            <person name="Horvitz H.R."/>
            <person name="Bessereau J.L."/>
            <person name="Jorgensen E.M."/>
            <person name="Jin Y."/>
        </authorList>
    </citation>
    <scope>FUNCTION</scope>
    <scope>INTERACTION WITH NICOTINIC ACETYLCHOLINE RECEPTOR</scope>
    <scope>TISSUE SPECIFICITY</scope>
    <scope>DEVELOPMENTAL STAGE</scope>
    <scope>DISRUPTION PHENOTYPE</scope>
    <scope>MUTAGENESIS OF VAL-309</scope>
</reference>
<reference key="4">
    <citation type="journal article" date="2013" name="PLoS Genet.">
        <title>Neuropeptides function in a homeostatic manner to modulate excitation-inhibition imbalance in C. elegans.</title>
        <authorList>
            <person name="Stawicki T.M."/>
            <person name="Takayanagi-Kiya S."/>
            <person name="Zhou K."/>
            <person name="Jin Y."/>
        </authorList>
    </citation>
    <scope>FUNCTION</scope>
    <scope>MUTAGENESIS OF VAL-309</scope>
</reference>
<reference key="5">
    <citation type="journal article" date="2016" name="Elife">
        <title>Release-dependent feedback inhibition by a presynaptically localized ligand-gated anion channel.</title>
        <authorList>
            <person name="Takayanagi-Kiya S."/>
            <person name="Zhou K."/>
            <person name="Jin Y."/>
        </authorList>
    </citation>
    <scope>FUNCTION</scope>
</reference>